<evidence type="ECO:0000255" key="1">
    <source>
        <dbReference type="HAMAP-Rule" id="MF_00004"/>
    </source>
</evidence>
<gene>
    <name evidence="1" type="primary">apt</name>
    <name type="ordered locus">CHU_2005</name>
</gene>
<keyword id="KW-0963">Cytoplasm</keyword>
<keyword id="KW-0328">Glycosyltransferase</keyword>
<keyword id="KW-0660">Purine salvage</keyword>
<keyword id="KW-1185">Reference proteome</keyword>
<keyword id="KW-0808">Transferase</keyword>
<protein>
    <recommendedName>
        <fullName evidence="1">Adenine phosphoribosyltransferase</fullName>
        <shortName evidence="1">APRT</shortName>
        <ecNumber evidence="1">2.4.2.7</ecNumber>
    </recommendedName>
</protein>
<comment type="function">
    <text evidence="1">Catalyzes a salvage reaction resulting in the formation of AMP, that is energically less costly than de novo synthesis.</text>
</comment>
<comment type="catalytic activity">
    <reaction evidence="1">
        <text>AMP + diphosphate = 5-phospho-alpha-D-ribose 1-diphosphate + adenine</text>
        <dbReference type="Rhea" id="RHEA:16609"/>
        <dbReference type="ChEBI" id="CHEBI:16708"/>
        <dbReference type="ChEBI" id="CHEBI:33019"/>
        <dbReference type="ChEBI" id="CHEBI:58017"/>
        <dbReference type="ChEBI" id="CHEBI:456215"/>
        <dbReference type="EC" id="2.4.2.7"/>
    </reaction>
</comment>
<comment type="pathway">
    <text evidence="1">Purine metabolism; AMP biosynthesis via salvage pathway; AMP from adenine: step 1/1.</text>
</comment>
<comment type="subunit">
    <text evidence="1">Homodimer.</text>
</comment>
<comment type="subcellular location">
    <subcellularLocation>
        <location evidence="1">Cytoplasm</location>
    </subcellularLocation>
</comment>
<comment type="similarity">
    <text evidence="1">Belongs to the purine/pyrimidine phosphoribosyltransferase family.</text>
</comment>
<accession>Q11TJ3</accession>
<proteinExistence type="inferred from homology"/>
<dbReference type="EC" id="2.4.2.7" evidence="1"/>
<dbReference type="EMBL" id="CP000383">
    <property type="protein sequence ID" value="ABG59271.1"/>
    <property type="molecule type" value="Genomic_DNA"/>
</dbReference>
<dbReference type="RefSeq" id="WP_011585388.1">
    <property type="nucleotide sequence ID" value="NC_008255.1"/>
</dbReference>
<dbReference type="SMR" id="Q11TJ3"/>
<dbReference type="STRING" id="269798.CHU_2005"/>
<dbReference type="KEGG" id="chu:CHU_2005"/>
<dbReference type="eggNOG" id="COG0503">
    <property type="taxonomic scope" value="Bacteria"/>
</dbReference>
<dbReference type="HOGENOM" id="CLU_063339_3_0_10"/>
<dbReference type="OrthoDB" id="9803963at2"/>
<dbReference type="UniPathway" id="UPA00588">
    <property type="reaction ID" value="UER00646"/>
</dbReference>
<dbReference type="Proteomes" id="UP000001822">
    <property type="component" value="Chromosome"/>
</dbReference>
<dbReference type="GO" id="GO:0005737">
    <property type="term" value="C:cytoplasm"/>
    <property type="evidence" value="ECO:0007669"/>
    <property type="project" value="UniProtKB-SubCell"/>
</dbReference>
<dbReference type="GO" id="GO:0002055">
    <property type="term" value="F:adenine binding"/>
    <property type="evidence" value="ECO:0007669"/>
    <property type="project" value="TreeGrafter"/>
</dbReference>
<dbReference type="GO" id="GO:0003999">
    <property type="term" value="F:adenine phosphoribosyltransferase activity"/>
    <property type="evidence" value="ECO:0007669"/>
    <property type="project" value="UniProtKB-UniRule"/>
</dbReference>
<dbReference type="GO" id="GO:0016208">
    <property type="term" value="F:AMP binding"/>
    <property type="evidence" value="ECO:0007669"/>
    <property type="project" value="TreeGrafter"/>
</dbReference>
<dbReference type="GO" id="GO:0006168">
    <property type="term" value="P:adenine salvage"/>
    <property type="evidence" value="ECO:0007669"/>
    <property type="project" value="InterPro"/>
</dbReference>
<dbReference type="GO" id="GO:0044209">
    <property type="term" value="P:AMP salvage"/>
    <property type="evidence" value="ECO:0007669"/>
    <property type="project" value="UniProtKB-UniRule"/>
</dbReference>
<dbReference type="GO" id="GO:0006166">
    <property type="term" value="P:purine ribonucleoside salvage"/>
    <property type="evidence" value="ECO:0007669"/>
    <property type="project" value="UniProtKB-KW"/>
</dbReference>
<dbReference type="CDD" id="cd06223">
    <property type="entry name" value="PRTases_typeI"/>
    <property type="match status" value="1"/>
</dbReference>
<dbReference type="FunFam" id="3.40.50.2020:FF:000021">
    <property type="entry name" value="Adenine phosphoribosyltransferase"/>
    <property type="match status" value="1"/>
</dbReference>
<dbReference type="Gene3D" id="3.40.50.2020">
    <property type="match status" value="1"/>
</dbReference>
<dbReference type="HAMAP" id="MF_00004">
    <property type="entry name" value="Aden_phosphoribosyltr"/>
    <property type="match status" value="1"/>
</dbReference>
<dbReference type="InterPro" id="IPR005764">
    <property type="entry name" value="Ade_phspho_trans"/>
</dbReference>
<dbReference type="InterPro" id="IPR000836">
    <property type="entry name" value="PRibTrfase_dom"/>
</dbReference>
<dbReference type="InterPro" id="IPR029057">
    <property type="entry name" value="PRTase-like"/>
</dbReference>
<dbReference type="InterPro" id="IPR050054">
    <property type="entry name" value="UPRTase/APRTase"/>
</dbReference>
<dbReference type="NCBIfam" id="TIGR01090">
    <property type="entry name" value="apt"/>
    <property type="match status" value="1"/>
</dbReference>
<dbReference type="NCBIfam" id="NF002634">
    <property type="entry name" value="PRK02304.1-3"/>
    <property type="match status" value="1"/>
</dbReference>
<dbReference type="NCBIfam" id="NF002636">
    <property type="entry name" value="PRK02304.1-5"/>
    <property type="match status" value="1"/>
</dbReference>
<dbReference type="PANTHER" id="PTHR32315">
    <property type="entry name" value="ADENINE PHOSPHORIBOSYLTRANSFERASE"/>
    <property type="match status" value="1"/>
</dbReference>
<dbReference type="PANTHER" id="PTHR32315:SF3">
    <property type="entry name" value="ADENINE PHOSPHORIBOSYLTRANSFERASE"/>
    <property type="match status" value="1"/>
</dbReference>
<dbReference type="Pfam" id="PF00156">
    <property type="entry name" value="Pribosyltran"/>
    <property type="match status" value="1"/>
</dbReference>
<dbReference type="SUPFAM" id="SSF53271">
    <property type="entry name" value="PRTase-like"/>
    <property type="match status" value="1"/>
</dbReference>
<reference key="1">
    <citation type="journal article" date="2007" name="Appl. Environ. Microbiol.">
        <title>Genome sequence of the cellulolytic gliding bacterium Cytophaga hutchinsonii.</title>
        <authorList>
            <person name="Xie G."/>
            <person name="Bruce D.C."/>
            <person name="Challacombe J.F."/>
            <person name="Chertkov O."/>
            <person name="Detter J.C."/>
            <person name="Gilna P."/>
            <person name="Han C.S."/>
            <person name="Lucas S."/>
            <person name="Misra M."/>
            <person name="Myers G.L."/>
            <person name="Richardson P."/>
            <person name="Tapia R."/>
            <person name="Thayer N."/>
            <person name="Thompson L.S."/>
            <person name="Brettin T.S."/>
            <person name="Henrissat B."/>
            <person name="Wilson D.B."/>
            <person name="McBride M.J."/>
        </authorList>
    </citation>
    <scope>NUCLEOTIDE SEQUENCE [LARGE SCALE GENOMIC DNA]</scope>
    <source>
        <strain>ATCC 33406 / DSM 1761 / JCM 20678 / CIP 103989 / IAM 12607 / NBRC 15051 / NCIMB 9469 / D465</strain>
    </source>
</reference>
<organism>
    <name type="scientific">Cytophaga hutchinsonii (strain ATCC 33406 / DSM 1761 / CIP 103989 / NBRC 15051 / NCIMB 9469 / D465)</name>
    <dbReference type="NCBI Taxonomy" id="269798"/>
    <lineage>
        <taxon>Bacteria</taxon>
        <taxon>Pseudomonadati</taxon>
        <taxon>Bacteroidota</taxon>
        <taxon>Cytophagia</taxon>
        <taxon>Cytophagales</taxon>
        <taxon>Cytophagaceae</taxon>
        <taxon>Cytophaga</taxon>
    </lineage>
</organism>
<name>APT_CYTH3</name>
<feature type="chain" id="PRO_0000321359" description="Adenine phosphoribosyltransferase">
    <location>
        <begin position="1"/>
        <end position="181"/>
    </location>
</feature>
<sequence>MATSEEILEQTIKSTIRDIVDFPEPGIIFKDITPLLKDPQLCKAIVQSITDQLRPLQPDALACLDSRGFWFGLSIAMELGIPMIPIRKKGKLPYETVYEEYALEYGTNTIEMHTDAVQPGCRVAIHDDILATGGTAEATSKLIKKAKGEIIAYSFLIELDFLKGKDKLAPYCTTIQSLINY</sequence>